<sequence>MAFPPNSWRPTGPLPTSSLSLRWRVMMLAMSMVALVVVLMAVAVYAVVSRALYDDLDNQLHSRARLLIESGSLAADPGKAIEGTAYSDVNAMLVIPGRSIYTANQQGQTLPLGEPEKDVISGELLMSLRTANHQRVLAVHLANGSSLLISKSLAPTVQVLRRLGTVLLIVGGIGVAVAAIAGGAVARAGLRPVGRLTEAAERVARTDDLRPIPVVGSDELARLTEAFNMMLRALAESRERQARLVSDAGHELRTPLTSLRTNVELLMAAQEPGAPPLPEDEMAGLRADVIAQIEELSTLVGDLVDLTREDAGGITPEPVDMADVIDRSLERVRRRRNDIEFDVDVIGWQVFGDAQGLGRAVLNLLDNAAKWSPPGGRVGVRLHQVDHMHAEIVVSDQGPGIPPEERRLVFERFYRSDAARAMPGSGLGLAIVQQVVLKHGGALRIDETVPGGNPPGASVHMLLPGQRIPDPGATRSAEGFVDDRGGHTVATE</sequence>
<organism>
    <name type="scientific">Mycolicibacterium smegmatis (strain ATCC 700084 / mc(2)155)</name>
    <name type="common">Mycobacterium smegmatis</name>
    <dbReference type="NCBI Taxonomy" id="246196"/>
    <lineage>
        <taxon>Bacteria</taxon>
        <taxon>Bacillati</taxon>
        <taxon>Actinomycetota</taxon>
        <taxon>Actinomycetes</taxon>
        <taxon>Mycobacteriales</taxon>
        <taxon>Mycobacteriaceae</taxon>
        <taxon>Mycolicibacterium</taxon>
    </lineage>
</organism>
<name>MPRB_MYCS2</name>
<keyword id="KW-0067">ATP-binding</keyword>
<keyword id="KW-1003">Cell membrane</keyword>
<keyword id="KW-0378">Hydrolase</keyword>
<keyword id="KW-0418">Kinase</keyword>
<keyword id="KW-0460">Magnesium</keyword>
<keyword id="KW-0464">Manganese</keyword>
<keyword id="KW-0472">Membrane</keyword>
<keyword id="KW-0547">Nucleotide-binding</keyword>
<keyword id="KW-0597">Phosphoprotein</keyword>
<keyword id="KW-0904">Protein phosphatase</keyword>
<keyword id="KW-1185">Reference proteome</keyword>
<keyword id="KW-0346">Stress response</keyword>
<keyword id="KW-0808">Transferase</keyword>
<keyword id="KW-0812">Transmembrane</keyword>
<keyword id="KW-1133">Transmembrane helix</keyword>
<keyword id="KW-0902">Two-component regulatory system</keyword>
<keyword id="KW-0843">Virulence</keyword>
<reference key="1">
    <citation type="submission" date="2006-10" db="EMBL/GenBank/DDBJ databases">
        <authorList>
            <person name="Fleischmann R.D."/>
            <person name="Dodson R.J."/>
            <person name="Haft D.H."/>
            <person name="Merkel J.S."/>
            <person name="Nelson W.C."/>
            <person name="Fraser C.M."/>
        </authorList>
    </citation>
    <scope>NUCLEOTIDE SEQUENCE [LARGE SCALE GENOMIC DNA]</scope>
    <source>
        <strain>ATCC 700084 / mc(2)155</strain>
    </source>
</reference>
<reference key="2">
    <citation type="journal article" date="2007" name="Genome Biol.">
        <title>Interrupted coding sequences in Mycobacterium smegmatis: authentic mutations or sequencing errors?</title>
        <authorList>
            <person name="Deshayes C."/>
            <person name="Perrodou E."/>
            <person name="Gallien S."/>
            <person name="Euphrasie D."/>
            <person name="Schaeffer C."/>
            <person name="Van-Dorsselaer A."/>
            <person name="Poch O."/>
            <person name="Lecompte O."/>
            <person name="Reyrat J.-M."/>
        </authorList>
    </citation>
    <scope>NUCLEOTIDE SEQUENCE [LARGE SCALE GENOMIC DNA]</scope>
    <source>
        <strain>ATCC 700084 / mc(2)155</strain>
    </source>
</reference>
<reference key="3">
    <citation type="journal article" date="2009" name="Genome Res.">
        <title>Ortho-proteogenomics: multiple proteomes investigation through orthology and a new MS-based protocol.</title>
        <authorList>
            <person name="Gallien S."/>
            <person name="Perrodou E."/>
            <person name="Carapito C."/>
            <person name="Deshayes C."/>
            <person name="Reyrat J.-M."/>
            <person name="Van Dorsselaer A."/>
            <person name="Poch O."/>
            <person name="Schaeffer C."/>
            <person name="Lecompte O."/>
        </authorList>
    </citation>
    <scope>NUCLEOTIDE SEQUENCE [LARGE SCALE GENOMIC DNA]</scope>
    <source>
        <strain>ATCC 700084 / mc(2)155</strain>
    </source>
</reference>
<dbReference type="EC" id="2.7.13.3"/>
<dbReference type="EC" id="3.1.3.-"/>
<dbReference type="EMBL" id="CP000480">
    <property type="protein sequence ID" value="ABK75510.1"/>
    <property type="status" value="ALT_INIT"/>
    <property type="molecule type" value="Genomic_DNA"/>
</dbReference>
<dbReference type="EMBL" id="CP001663">
    <property type="protein sequence ID" value="AFP41776.1"/>
    <property type="molecule type" value="Genomic_DNA"/>
</dbReference>
<dbReference type="RefSeq" id="WP_014878346.1">
    <property type="nucleotide sequence ID" value="NZ_SIJM01000006.1"/>
</dbReference>
<dbReference type="RefSeq" id="YP_889725.1">
    <property type="nucleotide sequence ID" value="NC_008596.1"/>
</dbReference>
<dbReference type="SMR" id="A0R3I7"/>
<dbReference type="STRING" id="246196.MSMEG_5487"/>
<dbReference type="PaxDb" id="246196-MSMEI_5335"/>
<dbReference type="KEGG" id="msb:LJ00_27120"/>
<dbReference type="KEGG" id="msg:MSMEI_5335"/>
<dbReference type="KEGG" id="msm:MSMEG_5487"/>
<dbReference type="PATRIC" id="fig|246196.19.peg.5347"/>
<dbReference type="eggNOG" id="COG2205">
    <property type="taxonomic scope" value="Bacteria"/>
</dbReference>
<dbReference type="OrthoDB" id="9786919at2"/>
<dbReference type="Proteomes" id="UP000000757">
    <property type="component" value="Chromosome"/>
</dbReference>
<dbReference type="Proteomes" id="UP000006158">
    <property type="component" value="Chromosome"/>
</dbReference>
<dbReference type="GO" id="GO:0005886">
    <property type="term" value="C:plasma membrane"/>
    <property type="evidence" value="ECO:0007669"/>
    <property type="project" value="UniProtKB-SubCell"/>
</dbReference>
<dbReference type="GO" id="GO:0005524">
    <property type="term" value="F:ATP binding"/>
    <property type="evidence" value="ECO:0007669"/>
    <property type="project" value="UniProtKB-KW"/>
</dbReference>
<dbReference type="GO" id="GO:0004721">
    <property type="term" value="F:phosphoprotein phosphatase activity"/>
    <property type="evidence" value="ECO:0007669"/>
    <property type="project" value="UniProtKB-KW"/>
</dbReference>
<dbReference type="GO" id="GO:0000155">
    <property type="term" value="F:phosphorelay sensor kinase activity"/>
    <property type="evidence" value="ECO:0007669"/>
    <property type="project" value="InterPro"/>
</dbReference>
<dbReference type="CDD" id="cd06225">
    <property type="entry name" value="HAMP"/>
    <property type="match status" value="1"/>
</dbReference>
<dbReference type="CDD" id="cd00075">
    <property type="entry name" value="HATPase"/>
    <property type="match status" value="1"/>
</dbReference>
<dbReference type="CDD" id="cd00082">
    <property type="entry name" value="HisKA"/>
    <property type="match status" value="1"/>
</dbReference>
<dbReference type="FunFam" id="3.30.565.10:FF:000066">
    <property type="entry name" value="Two-component sensor kinase MprB"/>
    <property type="match status" value="1"/>
</dbReference>
<dbReference type="Gene3D" id="1.10.287.130">
    <property type="match status" value="1"/>
</dbReference>
<dbReference type="Gene3D" id="6.10.340.10">
    <property type="match status" value="1"/>
</dbReference>
<dbReference type="Gene3D" id="3.30.565.10">
    <property type="entry name" value="Histidine kinase-like ATPase, C-terminal domain"/>
    <property type="match status" value="1"/>
</dbReference>
<dbReference type="InterPro" id="IPR050980">
    <property type="entry name" value="2C_sensor_his_kinase"/>
</dbReference>
<dbReference type="InterPro" id="IPR003660">
    <property type="entry name" value="HAMP_dom"/>
</dbReference>
<dbReference type="InterPro" id="IPR036890">
    <property type="entry name" value="HATPase_C_sf"/>
</dbReference>
<dbReference type="InterPro" id="IPR005467">
    <property type="entry name" value="His_kinase_dom"/>
</dbReference>
<dbReference type="InterPro" id="IPR003661">
    <property type="entry name" value="HisK_dim/P_dom"/>
</dbReference>
<dbReference type="InterPro" id="IPR036097">
    <property type="entry name" value="HisK_dim/P_sf"/>
</dbReference>
<dbReference type="InterPro" id="IPR004358">
    <property type="entry name" value="Sig_transdc_His_kin-like_C"/>
</dbReference>
<dbReference type="PANTHER" id="PTHR44936">
    <property type="entry name" value="SENSOR PROTEIN CREC"/>
    <property type="match status" value="1"/>
</dbReference>
<dbReference type="PANTHER" id="PTHR44936:SF9">
    <property type="entry name" value="SENSOR PROTEIN CREC"/>
    <property type="match status" value="1"/>
</dbReference>
<dbReference type="Pfam" id="PF00672">
    <property type="entry name" value="HAMP"/>
    <property type="match status" value="1"/>
</dbReference>
<dbReference type="Pfam" id="PF02518">
    <property type="entry name" value="HATPase_c"/>
    <property type="match status" value="1"/>
</dbReference>
<dbReference type="Pfam" id="PF00512">
    <property type="entry name" value="HisKA"/>
    <property type="match status" value="1"/>
</dbReference>
<dbReference type="PRINTS" id="PR00344">
    <property type="entry name" value="BCTRLSENSOR"/>
</dbReference>
<dbReference type="SMART" id="SM00304">
    <property type="entry name" value="HAMP"/>
    <property type="match status" value="1"/>
</dbReference>
<dbReference type="SMART" id="SM00387">
    <property type="entry name" value="HATPase_c"/>
    <property type="match status" value="1"/>
</dbReference>
<dbReference type="SMART" id="SM00388">
    <property type="entry name" value="HisKA"/>
    <property type="match status" value="1"/>
</dbReference>
<dbReference type="SUPFAM" id="SSF55874">
    <property type="entry name" value="ATPase domain of HSP90 chaperone/DNA topoisomerase II/histidine kinase"/>
    <property type="match status" value="1"/>
</dbReference>
<dbReference type="SUPFAM" id="SSF158472">
    <property type="entry name" value="HAMP domain-like"/>
    <property type="match status" value="1"/>
</dbReference>
<dbReference type="SUPFAM" id="SSF47384">
    <property type="entry name" value="Homodimeric domain of signal transducing histidine kinase"/>
    <property type="match status" value="1"/>
</dbReference>
<dbReference type="PROSITE" id="PS50885">
    <property type="entry name" value="HAMP"/>
    <property type="match status" value="1"/>
</dbReference>
<dbReference type="PROSITE" id="PS50109">
    <property type="entry name" value="HIS_KIN"/>
    <property type="match status" value="1"/>
</dbReference>
<proteinExistence type="inferred from homology"/>
<accession>A0R3I7</accession>
<accession>I7GE86</accession>
<evidence type="ECO:0000250" key="1"/>
<evidence type="ECO:0000255" key="2"/>
<evidence type="ECO:0000255" key="3">
    <source>
        <dbReference type="PROSITE-ProRule" id="PRU00102"/>
    </source>
</evidence>
<evidence type="ECO:0000255" key="4">
    <source>
        <dbReference type="PROSITE-ProRule" id="PRU00107"/>
    </source>
</evidence>
<evidence type="ECO:0000256" key="5">
    <source>
        <dbReference type="SAM" id="MobiDB-lite"/>
    </source>
</evidence>
<evidence type="ECO:0000305" key="6"/>
<feature type="chain" id="PRO_0000308436" description="Signal transduction histidine-protein kinase/phosphatase MprB">
    <location>
        <begin position="1"/>
        <end position="492"/>
    </location>
</feature>
<feature type="topological domain" description="Cytoplasmic" evidence="2">
    <location>
        <begin position="1"/>
        <end position="27"/>
    </location>
</feature>
<feature type="transmembrane region" description="Helical" evidence="2">
    <location>
        <begin position="28"/>
        <end position="48"/>
    </location>
</feature>
<feature type="topological domain" description="Extracellular" evidence="2">
    <location>
        <begin position="49"/>
        <end position="165"/>
    </location>
</feature>
<feature type="transmembrane region" description="Helical" evidence="2">
    <location>
        <begin position="166"/>
        <end position="186"/>
    </location>
</feature>
<feature type="topological domain" description="Cytoplasmic" evidence="2">
    <location>
        <begin position="187"/>
        <end position="492"/>
    </location>
</feature>
<feature type="domain" description="HAMP" evidence="3">
    <location>
        <begin position="187"/>
        <end position="239"/>
    </location>
</feature>
<feature type="domain" description="Histidine kinase" evidence="4">
    <location>
        <begin position="247"/>
        <end position="467"/>
    </location>
</feature>
<feature type="region of interest" description="Disordered" evidence="5">
    <location>
        <begin position="470"/>
        <end position="492"/>
    </location>
</feature>
<feature type="modified residue" description="Phosphohistidine; by autocatalysis" evidence="4">
    <location>
        <position position="250"/>
    </location>
</feature>
<gene>
    <name type="primary">mprB</name>
    <name type="ordered locus">MSMEG_5487</name>
    <name type="ordered locus">MSMEI_5335</name>
</gene>
<comment type="function">
    <text evidence="1">Member of the two-component regulatory system MprB/MprA which contributes to maintaining a balance among several systems involved in stress resistance and is required for establishment and maintenance of persistent infection in the host. In response to environmental signals MprB acts both as a membrane-associated protein kinase that undergoes autophosphorylation and subsequently transfers the phosphate to MprA, and a protein phosphatase that dephosphorylates phospho-MprA (By similarity).</text>
</comment>
<comment type="catalytic activity">
    <reaction>
        <text>ATP + protein L-histidine = ADP + protein N-phospho-L-histidine.</text>
        <dbReference type="EC" id="2.7.13.3"/>
    </reaction>
</comment>
<comment type="cofactor">
    <cofactor evidence="1">
        <name>Mg(2+)</name>
        <dbReference type="ChEBI" id="CHEBI:18420"/>
    </cofactor>
    <cofactor evidence="1">
        <name>Mn(2+)</name>
        <dbReference type="ChEBI" id="CHEBI:29035"/>
    </cofactor>
</comment>
<comment type="subcellular location">
    <subcellularLocation>
        <location evidence="6">Cell membrane</location>
        <topology evidence="6">Multi-pass membrane protein</topology>
    </subcellularLocation>
</comment>
<comment type="PTM">
    <text evidence="1">Autophosphorylated.</text>
</comment>
<comment type="sequence caution" evidence="6">
    <conflict type="erroneous initiation">
        <sequence resource="EMBL-CDS" id="ABK75510"/>
    </conflict>
</comment>
<protein>
    <recommendedName>
        <fullName>Signal transduction histidine-protein kinase/phosphatase MprB</fullName>
        <ecNumber>2.7.13.3</ecNumber>
        <ecNumber>3.1.3.-</ecNumber>
    </recommendedName>
    <alternativeName>
        <fullName>Mycobacterial persistence regulator B</fullName>
    </alternativeName>
</protein>